<protein>
    <recommendedName>
        <fullName evidence="1">Ribosomal RNA large subunit methyltransferase G</fullName>
        <ecNumber evidence="1">2.1.1.174</ecNumber>
    </recommendedName>
    <alternativeName>
        <fullName evidence="1">23S rRNA m2G1835 methyltransferase</fullName>
    </alternativeName>
    <alternativeName>
        <fullName evidence="1">rRNA (guanine-N(2)-)-methyltransferase RlmG</fullName>
    </alternativeName>
</protein>
<sequence length="380" mass="41762">MQTLLDTAHCRLTLYRYPRQLQDPLQAWDAADEYLINTLAEEPLERDGPVIIMNDGFGALAAYLHGHAPVSVTDSHISEQATLANLAENGLDPHAIRLQDALASLPDAPALVVIKVSKYQALLEQQLLALRQVATPATRVIAAGKAKDIHSSTLALFEKYLGPTRTSLAWKKARLIHCTPVATPTERPALANPFPTVWPLEGTDMLIHNHANVFSRTSLDIGARFMLDNLPIHSARKVIDLGCGNGVLGLSLLARDAEVEVTFIDESHMAVASARLNVEHNLPAALPRTHFLVNNCLDGVAVGSVDRILCNPPFHQLQAITDHIAWQMFSDAHRVLPKGGELWIVGNRHLDYHNKLKRLFANAQVVASNSKFVILKAIKR</sequence>
<keyword id="KW-0963">Cytoplasm</keyword>
<keyword id="KW-0489">Methyltransferase</keyword>
<keyword id="KW-1185">Reference proteome</keyword>
<keyword id="KW-0698">rRNA processing</keyword>
<keyword id="KW-0949">S-adenosyl-L-methionine</keyword>
<keyword id="KW-0808">Transferase</keyword>
<name>RLMG_AERHH</name>
<accession>A0KHC4</accession>
<comment type="function">
    <text evidence="1">Specifically methylates the guanine in position 1835 (m2G1835) of 23S rRNA.</text>
</comment>
<comment type="catalytic activity">
    <reaction evidence="1">
        <text>guanosine(1835) in 23S rRNA + S-adenosyl-L-methionine = N(2)-methylguanosine(1835) in 23S rRNA + S-adenosyl-L-homocysteine + H(+)</text>
        <dbReference type="Rhea" id="RHEA:42744"/>
        <dbReference type="Rhea" id="RHEA-COMP:10217"/>
        <dbReference type="Rhea" id="RHEA-COMP:10218"/>
        <dbReference type="ChEBI" id="CHEBI:15378"/>
        <dbReference type="ChEBI" id="CHEBI:57856"/>
        <dbReference type="ChEBI" id="CHEBI:59789"/>
        <dbReference type="ChEBI" id="CHEBI:74269"/>
        <dbReference type="ChEBI" id="CHEBI:74481"/>
        <dbReference type="EC" id="2.1.1.174"/>
    </reaction>
</comment>
<comment type="subcellular location">
    <subcellularLocation>
        <location evidence="1">Cytoplasm</location>
    </subcellularLocation>
</comment>
<comment type="similarity">
    <text evidence="1">Belongs to the methyltransferase superfamily. RlmG family.</text>
</comment>
<organism>
    <name type="scientific">Aeromonas hydrophila subsp. hydrophila (strain ATCC 7966 / DSM 30187 / BCRC 13018 / CCUG 14551 / JCM 1027 / KCTC 2358 / NCIMB 9240 / NCTC 8049)</name>
    <dbReference type="NCBI Taxonomy" id="380703"/>
    <lineage>
        <taxon>Bacteria</taxon>
        <taxon>Pseudomonadati</taxon>
        <taxon>Pseudomonadota</taxon>
        <taxon>Gammaproteobacteria</taxon>
        <taxon>Aeromonadales</taxon>
        <taxon>Aeromonadaceae</taxon>
        <taxon>Aeromonas</taxon>
    </lineage>
</organism>
<feature type="chain" id="PRO_0000366444" description="Ribosomal RNA large subunit methyltransferase G">
    <location>
        <begin position="1"/>
        <end position="380"/>
    </location>
</feature>
<dbReference type="EC" id="2.1.1.174" evidence="1"/>
<dbReference type="EMBL" id="CP000462">
    <property type="protein sequence ID" value="ABK36108.1"/>
    <property type="molecule type" value="Genomic_DNA"/>
</dbReference>
<dbReference type="RefSeq" id="WP_011705059.1">
    <property type="nucleotide sequence ID" value="NC_008570.1"/>
</dbReference>
<dbReference type="RefSeq" id="YP_855675.1">
    <property type="nucleotide sequence ID" value="NC_008570.1"/>
</dbReference>
<dbReference type="SMR" id="A0KHC4"/>
<dbReference type="STRING" id="380703.AHA_1134"/>
<dbReference type="EnsemblBacteria" id="ABK36108">
    <property type="protein sequence ID" value="ABK36108"/>
    <property type="gene ID" value="AHA_1134"/>
</dbReference>
<dbReference type="GeneID" id="4489932"/>
<dbReference type="KEGG" id="aha:AHA_1134"/>
<dbReference type="PATRIC" id="fig|380703.7.peg.1139"/>
<dbReference type="eggNOG" id="COG2813">
    <property type="taxonomic scope" value="Bacteria"/>
</dbReference>
<dbReference type="HOGENOM" id="CLU_040288_4_0_6"/>
<dbReference type="OrthoDB" id="29650at2"/>
<dbReference type="Proteomes" id="UP000000756">
    <property type="component" value="Chromosome"/>
</dbReference>
<dbReference type="GO" id="GO:0005737">
    <property type="term" value="C:cytoplasm"/>
    <property type="evidence" value="ECO:0007669"/>
    <property type="project" value="UniProtKB-SubCell"/>
</dbReference>
<dbReference type="GO" id="GO:0052916">
    <property type="term" value="F:23S rRNA (guanine(1835)-N(2))-methyltransferase activity"/>
    <property type="evidence" value="ECO:0007669"/>
    <property type="project" value="UniProtKB-EC"/>
</dbReference>
<dbReference type="GO" id="GO:0003676">
    <property type="term" value="F:nucleic acid binding"/>
    <property type="evidence" value="ECO:0007669"/>
    <property type="project" value="InterPro"/>
</dbReference>
<dbReference type="CDD" id="cd02440">
    <property type="entry name" value="AdoMet_MTases"/>
    <property type="match status" value="1"/>
</dbReference>
<dbReference type="Gene3D" id="3.40.50.150">
    <property type="entry name" value="Vaccinia Virus protein VP39"/>
    <property type="match status" value="2"/>
</dbReference>
<dbReference type="HAMAP" id="MF_01859">
    <property type="entry name" value="23SrRNA_methyltr_G"/>
    <property type="match status" value="1"/>
</dbReference>
<dbReference type="InterPro" id="IPR002052">
    <property type="entry name" value="DNA_methylase_N6_adenine_CS"/>
</dbReference>
<dbReference type="InterPro" id="IPR017237">
    <property type="entry name" value="rRNA_m2G-MeTrfase_RlmG"/>
</dbReference>
<dbReference type="InterPro" id="IPR046977">
    <property type="entry name" value="RsmC/RlmG"/>
</dbReference>
<dbReference type="InterPro" id="IPR029063">
    <property type="entry name" value="SAM-dependent_MTases_sf"/>
</dbReference>
<dbReference type="InterPro" id="IPR007848">
    <property type="entry name" value="Small_mtfrase_dom"/>
</dbReference>
<dbReference type="PANTHER" id="PTHR47816:SF5">
    <property type="entry name" value="RIBOSOMAL RNA LARGE SUBUNIT METHYLTRANSFERASE G"/>
    <property type="match status" value="1"/>
</dbReference>
<dbReference type="PANTHER" id="PTHR47816">
    <property type="entry name" value="RIBOSOMAL RNA SMALL SUBUNIT METHYLTRANSFERASE C"/>
    <property type="match status" value="1"/>
</dbReference>
<dbReference type="Pfam" id="PF05175">
    <property type="entry name" value="MTS"/>
    <property type="match status" value="1"/>
</dbReference>
<dbReference type="PIRSF" id="PIRSF037565">
    <property type="entry name" value="RRNA_m2G_Mtase_RsmD_prd"/>
    <property type="match status" value="1"/>
</dbReference>
<dbReference type="SUPFAM" id="SSF53335">
    <property type="entry name" value="S-adenosyl-L-methionine-dependent methyltransferases"/>
    <property type="match status" value="1"/>
</dbReference>
<evidence type="ECO:0000255" key="1">
    <source>
        <dbReference type="HAMAP-Rule" id="MF_01859"/>
    </source>
</evidence>
<reference key="1">
    <citation type="journal article" date="2006" name="J. Bacteriol.">
        <title>Genome sequence of Aeromonas hydrophila ATCC 7966T: jack of all trades.</title>
        <authorList>
            <person name="Seshadri R."/>
            <person name="Joseph S.W."/>
            <person name="Chopra A.K."/>
            <person name="Sha J."/>
            <person name="Shaw J."/>
            <person name="Graf J."/>
            <person name="Haft D.H."/>
            <person name="Wu M."/>
            <person name="Ren Q."/>
            <person name="Rosovitz M.J."/>
            <person name="Madupu R."/>
            <person name="Tallon L."/>
            <person name="Kim M."/>
            <person name="Jin S."/>
            <person name="Vuong H."/>
            <person name="Stine O.C."/>
            <person name="Ali A."/>
            <person name="Horneman A.J."/>
            <person name="Heidelberg J.F."/>
        </authorList>
    </citation>
    <scope>NUCLEOTIDE SEQUENCE [LARGE SCALE GENOMIC DNA]</scope>
    <source>
        <strain>ATCC 7966 / DSM 30187 / BCRC 13018 / CCUG 14551 / JCM 1027 / KCTC 2358 / NCIMB 9240 / NCTC 8049</strain>
    </source>
</reference>
<gene>
    <name evidence="1" type="primary">rlmG</name>
    <name type="ordered locus">AHA_1134</name>
</gene>
<proteinExistence type="inferred from homology"/>